<keyword id="KW-1015">Disulfide bond</keyword>
<keyword id="KW-1185">Reference proteome</keyword>
<keyword id="KW-0708">Seed storage protein</keyword>
<keyword id="KW-0732">Signal</keyword>
<keyword id="KW-0758">Storage protein</keyword>
<comment type="function">
    <text evidence="2">Seed storage protein. Not integrated in the gluten polymer through disulfide bonds, unless incorporated by reduction and reoxidation during dough making. Increases dough strength and bread volume, but decreases dough stability when added into a base wheat flour.</text>
</comment>
<comment type="PTM">
    <text evidence="3">Contains 7 disulfide bonds.</text>
</comment>
<comment type="similarity">
    <text evidence="3">Belongs to the prolamin family.</text>
</comment>
<evidence type="ECO:0000255" key="1"/>
<evidence type="ECO:0000269" key="2">
    <source>
    </source>
</evidence>
<evidence type="ECO:0000305" key="3"/>
<proteinExistence type="inferred from homology"/>
<accession>P0CZ09</accession>
<protein>
    <recommendedName>
        <fullName>Avenin-like a5</fullName>
    </recommendedName>
    <alternativeName>
        <fullName>LMW-gliadin 1111</fullName>
        <shortName>LMGli1111</shortName>
    </alternativeName>
</protein>
<name>AVLA5_WHEAT</name>
<organism>
    <name type="scientific">Triticum aestivum</name>
    <name type="common">Wheat</name>
    <dbReference type="NCBI Taxonomy" id="4565"/>
    <lineage>
        <taxon>Eukaryota</taxon>
        <taxon>Viridiplantae</taxon>
        <taxon>Streptophyta</taxon>
        <taxon>Embryophyta</taxon>
        <taxon>Tracheophyta</taxon>
        <taxon>Spermatophyta</taxon>
        <taxon>Magnoliopsida</taxon>
        <taxon>Liliopsida</taxon>
        <taxon>Poales</taxon>
        <taxon>Poaceae</taxon>
        <taxon>BOP clade</taxon>
        <taxon>Pooideae</taxon>
        <taxon>Triticodae</taxon>
        <taxon>Triticeae</taxon>
        <taxon>Triticinae</taxon>
        <taxon>Triticum</taxon>
    </lineage>
</organism>
<reference key="1">
    <citation type="journal article" date="2003" name="Theor. Appl. Genet.">
        <title>The characterisation and mapping of a family of LMW-gliadin genes: effects on dough properties and bread volume.</title>
        <authorList>
            <person name="Clarke B.C."/>
            <person name="Phongkham T."/>
            <person name="Gianibelli M.C."/>
            <person name="Beasley H."/>
            <person name="Bekes F."/>
        </authorList>
    </citation>
    <scope>NUCLEOTIDE SEQUENCE [GENOMIC DNA / MRNA]</scope>
    <scope>FUNCTION</scope>
    <source>
        <strain>cv. Wyuna</strain>
    </source>
</reference>
<dbReference type="STRING" id="4565.P0CZ09"/>
<dbReference type="Proteomes" id="UP000019116">
    <property type="component" value="Unplaced"/>
</dbReference>
<dbReference type="ExpressionAtlas" id="P0CZ09">
    <property type="expression patterns" value="baseline"/>
</dbReference>
<dbReference type="GO" id="GO:0045735">
    <property type="term" value="F:nutrient reservoir activity"/>
    <property type="evidence" value="ECO:0007669"/>
    <property type="project" value="UniProtKB-KW"/>
</dbReference>
<dbReference type="CDD" id="cd00261">
    <property type="entry name" value="AAI_SS"/>
    <property type="match status" value="1"/>
</dbReference>
<dbReference type="Gene3D" id="1.10.110.10">
    <property type="entry name" value="Plant lipid-transfer and hydrophobic proteins"/>
    <property type="match status" value="1"/>
</dbReference>
<dbReference type="InterPro" id="IPR036312">
    <property type="entry name" value="Bifun_inhib/LTP/seed_sf"/>
</dbReference>
<dbReference type="InterPro" id="IPR016140">
    <property type="entry name" value="Bifunc_inhib/LTP/seed_store"/>
</dbReference>
<dbReference type="InterPro" id="IPR001954">
    <property type="entry name" value="Glia_glutenin"/>
</dbReference>
<dbReference type="PANTHER" id="PTHR33454:SF4">
    <property type="entry name" value="AVENIN-LIKE A4"/>
    <property type="match status" value="1"/>
</dbReference>
<dbReference type="PANTHER" id="PTHR33454">
    <property type="entry name" value="PROLAMIN PPROL 14P"/>
    <property type="match status" value="1"/>
</dbReference>
<dbReference type="Pfam" id="PF13016">
    <property type="entry name" value="Gliadin"/>
    <property type="match status" value="1"/>
</dbReference>
<dbReference type="PRINTS" id="PR00208">
    <property type="entry name" value="GLIADGLUTEN"/>
</dbReference>
<dbReference type="SUPFAM" id="SSF47699">
    <property type="entry name" value="Bifunctional inhibitor/lipid-transfer protein/seed storage 2S albumin"/>
    <property type="match status" value="1"/>
</dbReference>
<sequence>MKTMLILALIALAATSVVAQLDTTCSQGYGQCQQQPQQQVNTCSALLQQCSPTPYVQSQMWQASGCQLMRQQCCQPLAQISEQARCHAVCGVAQVIMRQQQGQSFGQPQQQQGQSFSQPQQQVPIEIRRMVLQTLPSMCNVNIPQYCTTTPCSTITQTPYNVPMATTCVGGTC</sequence>
<feature type="signal peptide" evidence="1">
    <location>
        <begin position="1"/>
        <end position="19"/>
    </location>
</feature>
<feature type="chain" id="PRO_0000410696" description="Avenin-like a5">
    <location>
        <begin position="20"/>
        <end position="173"/>
    </location>
</feature>